<accession>Q8YPJ1</accession>
<proteinExistence type="inferred from homology"/>
<keyword id="KW-1185">Reference proteome</keyword>
<keyword id="KW-0687">Ribonucleoprotein</keyword>
<keyword id="KW-0689">Ribosomal protein</keyword>
<keyword id="KW-0694">RNA-binding</keyword>
<keyword id="KW-0699">rRNA-binding</keyword>
<keyword id="KW-0820">tRNA-binding</keyword>
<evidence type="ECO:0000255" key="1">
    <source>
        <dbReference type="HAMAP-Rule" id="MF_01333"/>
    </source>
</evidence>
<evidence type="ECO:0000305" key="2"/>
<feature type="chain" id="PRO_0000124884" description="Large ribosomal subunit protein uL5">
    <location>
        <begin position="1"/>
        <end position="182"/>
    </location>
</feature>
<organism>
    <name type="scientific">Nostoc sp. (strain PCC 7120 / SAG 25.82 / UTEX 2576)</name>
    <dbReference type="NCBI Taxonomy" id="103690"/>
    <lineage>
        <taxon>Bacteria</taxon>
        <taxon>Bacillati</taxon>
        <taxon>Cyanobacteriota</taxon>
        <taxon>Cyanophyceae</taxon>
        <taxon>Nostocales</taxon>
        <taxon>Nostocaceae</taxon>
        <taxon>Nostoc</taxon>
    </lineage>
</organism>
<dbReference type="EMBL" id="BA000019">
    <property type="protein sequence ID" value="BAB75902.1"/>
    <property type="molecule type" value="Genomic_DNA"/>
</dbReference>
<dbReference type="PIR" id="AD2331">
    <property type="entry name" value="AD2331"/>
</dbReference>
<dbReference type="RefSeq" id="WP_010998341.1">
    <property type="nucleotide sequence ID" value="NZ_RSCN01000010.1"/>
</dbReference>
<dbReference type="SMR" id="Q8YPJ1"/>
<dbReference type="STRING" id="103690.gene:10496252"/>
<dbReference type="KEGG" id="ana:all4203"/>
<dbReference type="eggNOG" id="COG0094">
    <property type="taxonomic scope" value="Bacteria"/>
</dbReference>
<dbReference type="OrthoDB" id="9806626at2"/>
<dbReference type="Proteomes" id="UP000002483">
    <property type="component" value="Chromosome"/>
</dbReference>
<dbReference type="GO" id="GO:1990904">
    <property type="term" value="C:ribonucleoprotein complex"/>
    <property type="evidence" value="ECO:0007669"/>
    <property type="project" value="UniProtKB-KW"/>
</dbReference>
<dbReference type="GO" id="GO:0005840">
    <property type="term" value="C:ribosome"/>
    <property type="evidence" value="ECO:0007669"/>
    <property type="project" value="UniProtKB-KW"/>
</dbReference>
<dbReference type="GO" id="GO:0019843">
    <property type="term" value="F:rRNA binding"/>
    <property type="evidence" value="ECO:0007669"/>
    <property type="project" value="UniProtKB-UniRule"/>
</dbReference>
<dbReference type="GO" id="GO:0003735">
    <property type="term" value="F:structural constituent of ribosome"/>
    <property type="evidence" value="ECO:0007669"/>
    <property type="project" value="InterPro"/>
</dbReference>
<dbReference type="GO" id="GO:0000049">
    <property type="term" value="F:tRNA binding"/>
    <property type="evidence" value="ECO:0007669"/>
    <property type="project" value="UniProtKB-UniRule"/>
</dbReference>
<dbReference type="GO" id="GO:0006412">
    <property type="term" value="P:translation"/>
    <property type="evidence" value="ECO:0007669"/>
    <property type="project" value="UniProtKB-UniRule"/>
</dbReference>
<dbReference type="FunFam" id="3.30.1440.10:FF:000001">
    <property type="entry name" value="50S ribosomal protein L5"/>
    <property type="match status" value="1"/>
</dbReference>
<dbReference type="Gene3D" id="3.30.1440.10">
    <property type="match status" value="1"/>
</dbReference>
<dbReference type="HAMAP" id="MF_01333_B">
    <property type="entry name" value="Ribosomal_uL5_B"/>
    <property type="match status" value="1"/>
</dbReference>
<dbReference type="InterPro" id="IPR002132">
    <property type="entry name" value="Ribosomal_uL5"/>
</dbReference>
<dbReference type="InterPro" id="IPR020930">
    <property type="entry name" value="Ribosomal_uL5_bac-type"/>
</dbReference>
<dbReference type="InterPro" id="IPR031309">
    <property type="entry name" value="Ribosomal_uL5_C"/>
</dbReference>
<dbReference type="InterPro" id="IPR020929">
    <property type="entry name" value="Ribosomal_uL5_CS"/>
</dbReference>
<dbReference type="InterPro" id="IPR022803">
    <property type="entry name" value="Ribosomal_uL5_dom_sf"/>
</dbReference>
<dbReference type="InterPro" id="IPR031310">
    <property type="entry name" value="Ribosomal_uL5_N"/>
</dbReference>
<dbReference type="NCBIfam" id="NF000585">
    <property type="entry name" value="PRK00010.1"/>
    <property type="match status" value="1"/>
</dbReference>
<dbReference type="PANTHER" id="PTHR11994">
    <property type="entry name" value="60S RIBOSOMAL PROTEIN L11-RELATED"/>
    <property type="match status" value="1"/>
</dbReference>
<dbReference type="Pfam" id="PF00281">
    <property type="entry name" value="Ribosomal_L5"/>
    <property type="match status" value="1"/>
</dbReference>
<dbReference type="Pfam" id="PF00673">
    <property type="entry name" value="Ribosomal_L5_C"/>
    <property type="match status" value="1"/>
</dbReference>
<dbReference type="PIRSF" id="PIRSF002161">
    <property type="entry name" value="Ribosomal_L5"/>
    <property type="match status" value="1"/>
</dbReference>
<dbReference type="SUPFAM" id="SSF55282">
    <property type="entry name" value="RL5-like"/>
    <property type="match status" value="1"/>
</dbReference>
<dbReference type="PROSITE" id="PS00358">
    <property type="entry name" value="RIBOSOMAL_L5"/>
    <property type="match status" value="1"/>
</dbReference>
<gene>
    <name evidence="1" type="primary">rplE</name>
    <name evidence="1" type="synonym">rpl5</name>
    <name type="ordered locus">all4203</name>
</gene>
<name>RL5_NOSS1</name>
<comment type="function">
    <text evidence="1">This is one of the proteins that bind and probably mediate the attachment of the 5S RNA into the large ribosomal subunit, where it forms part of the central protuberance. In the 70S ribosome it contacts protein S13 of the 30S subunit (bridge B1b), connecting the 2 subunits; this bridge is implicated in subunit movement. Contacts the P site tRNA; the 5S rRNA and some of its associated proteins might help stabilize positioning of ribosome-bound tRNAs.</text>
</comment>
<comment type="subunit">
    <text evidence="1">Part of the 50S ribosomal subunit; part of the 5S rRNA/L5/L18/L25 subcomplex. Contacts the 5S rRNA and the P site tRNA. Forms a bridge to the 30S subunit in the 70S ribosome.</text>
</comment>
<comment type="similarity">
    <text evidence="1">Belongs to the universal ribosomal protein uL5 family.</text>
</comment>
<sequence>MATTRLKTLYQETIVPKLTQQFQYTNVHQVPKLVKITVNRGLGEAAQNAKSLEASLTEIATITGQKPVVTRAKKAIAGFKIRQGMPVGIMVTLRGERMYAFFDRLISLSLPRIRDFRGISPKSFDGRGNYTLGVREQLIFPEIEYDSIDQIRGLDISIITTAKNDEEGRALLKEFGMPFRDQ</sequence>
<protein>
    <recommendedName>
        <fullName evidence="1">Large ribosomal subunit protein uL5</fullName>
    </recommendedName>
    <alternativeName>
        <fullName evidence="2">50S ribosomal protein L5</fullName>
    </alternativeName>
</protein>
<reference key="1">
    <citation type="journal article" date="2001" name="DNA Res.">
        <title>Complete genomic sequence of the filamentous nitrogen-fixing cyanobacterium Anabaena sp. strain PCC 7120.</title>
        <authorList>
            <person name="Kaneko T."/>
            <person name="Nakamura Y."/>
            <person name="Wolk C.P."/>
            <person name="Kuritz T."/>
            <person name="Sasamoto S."/>
            <person name="Watanabe A."/>
            <person name="Iriguchi M."/>
            <person name="Ishikawa A."/>
            <person name="Kawashima K."/>
            <person name="Kimura T."/>
            <person name="Kishida Y."/>
            <person name="Kohara M."/>
            <person name="Matsumoto M."/>
            <person name="Matsuno A."/>
            <person name="Muraki A."/>
            <person name="Nakazaki N."/>
            <person name="Shimpo S."/>
            <person name="Sugimoto M."/>
            <person name="Takazawa M."/>
            <person name="Yamada M."/>
            <person name="Yasuda M."/>
            <person name="Tabata S."/>
        </authorList>
    </citation>
    <scope>NUCLEOTIDE SEQUENCE [LARGE SCALE GENOMIC DNA]</scope>
    <source>
        <strain>PCC 7120 / SAG 25.82 / UTEX 2576</strain>
    </source>
</reference>